<name>PVK2_GROGR</name>
<feature type="peptide" id="PRO_0000378790" description="Periviscerokinin-2" evidence="2">
    <location>
        <begin position="1"/>
        <end position="11"/>
    </location>
</feature>
<feature type="modified residue" description="Valine amide" evidence="2">
    <location>
        <position position="11"/>
    </location>
</feature>
<organism>
    <name type="scientific">Gromphadorhina grandidieri</name>
    <name type="common">Cockroach</name>
    <dbReference type="NCBI Taxonomy" id="521511"/>
    <lineage>
        <taxon>Eukaryota</taxon>
        <taxon>Metazoa</taxon>
        <taxon>Ecdysozoa</taxon>
        <taxon>Arthropoda</taxon>
        <taxon>Hexapoda</taxon>
        <taxon>Insecta</taxon>
        <taxon>Pterygota</taxon>
        <taxon>Neoptera</taxon>
        <taxon>Polyneoptera</taxon>
        <taxon>Dictyoptera</taxon>
        <taxon>Blattodea</taxon>
        <taxon>Blaberoidea</taxon>
        <taxon>Blaberidae</taxon>
        <taxon>Oxyhaloinae</taxon>
        <taxon>Gromphadorhina</taxon>
    </lineage>
</organism>
<reference evidence="4" key="1">
    <citation type="journal article" date="2009" name="BMC Evol. Biol.">
        <title>A proteomic approach for studying insect phylogeny: CAPA peptides of ancient insect taxa (Dictyoptera, Blattoptera) as a test case.</title>
        <authorList>
            <person name="Roth S."/>
            <person name="Fromm B."/>
            <person name="Gaede G."/>
            <person name="Predel R."/>
        </authorList>
    </citation>
    <scope>PROTEIN SEQUENCE</scope>
    <scope>AMIDATION AT VAL-11</scope>
    <source>
        <tissue evidence="2">Abdominal perisympathetic organs</tissue>
    </source>
</reference>
<keyword id="KW-0027">Amidation</keyword>
<keyword id="KW-0903">Direct protein sequencing</keyword>
<keyword id="KW-0527">Neuropeptide</keyword>
<keyword id="KW-0964">Secreted</keyword>
<accession>P85636</accession>
<dbReference type="GO" id="GO:0005576">
    <property type="term" value="C:extracellular region"/>
    <property type="evidence" value="ECO:0007669"/>
    <property type="project" value="UniProtKB-SubCell"/>
</dbReference>
<dbReference type="GO" id="GO:0007218">
    <property type="term" value="P:neuropeptide signaling pathway"/>
    <property type="evidence" value="ECO:0007669"/>
    <property type="project" value="UniProtKB-KW"/>
</dbReference>
<dbReference type="InterPro" id="IPR013231">
    <property type="entry name" value="Periviscerokinin"/>
</dbReference>
<dbReference type="Pfam" id="PF08259">
    <property type="entry name" value="Periviscerokin"/>
    <property type="match status" value="1"/>
</dbReference>
<evidence type="ECO:0000255" key="1"/>
<evidence type="ECO:0000269" key="2">
    <source>
    </source>
</evidence>
<evidence type="ECO:0000303" key="3">
    <source>
    </source>
</evidence>
<evidence type="ECO:0000305" key="4"/>
<sequence length="11" mass="1103">GSSGLISMPRV</sequence>
<proteinExistence type="evidence at protein level"/>
<comment type="function">
    <text evidence="4">Mediates visceral muscle contractile activity (myotropic activity).</text>
</comment>
<comment type="subcellular location">
    <subcellularLocation>
        <location evidence="4">Secreted</location>
    </subcellularLocation>
</comment>
<comment type="similarity">
    <text evidence="1">Belongs to the periviscerokinin family.</text>
</comment>
<protein>
    <recommendedName>
        <fullName evidence="3">Periviscerokinin-2</fullName>
        <shortName evidence="3">GroGr-PVK-2</shortName>
    </recommendedName>
</protein>